<keyword id="KW-0963">Cytoplasm</keyword>
<keyword id="KW-0255">Endonuclease</keyword>
<keyword id="KW-0378">Hydrolase</keyword>
<keyword id="KW-0460">Magnesium</keyword>
<keyword id="KW-0479">Metal-binding</keyword>
<keyword id="KW-0507">mRNA processing</keyword>
<keyword id="KW-0540">Nuclease</keyword>
<keyword id="KW-0694">RNA-binding</keyword>
<keyword id="KW-0698">rRNA processing</keyword>
<keyword id="KW-0699">rRNA-binding</keyword>
<keyword id="KW-0819">tRNA processing</keyword>
<organism>
    <name type="scientific">Streptococcus pneumoniae (strain Taiwan19F-14)</name>
    <dbReference type="NCBI Taxonomy" id="487213"/>
    <lineage>
        <taxon>Bacteria</taxon>
        <taxon>Bacillati</taxon>
        <taxon>Bacillota</taxon>
        <taxon>Bacilli</taxon>
        <taxon>Lactobacillales</taxon>
        <taxon>Streptococcaceae</taxon>
        <taxon>Streptococcus</taxon>
    </lineage>
</organism>
<protein>
    <recommendedName>
        <fullName evidence="1">Ribonuclease 3</fullName>
        <ecNumber evidence="1">3.1.26.3</ecNumber>
    </recommendedName>
    <alternativeName>
        <fullName evidence="1">Ribonuclease III</fullName>
        <shortName evidence="1">RNase III</shortName>
    </alternativeName>
</protein>
<proteinExistence type="inferred from homology"/>
<sequence>MKELQTVLKNHFAIEFTDKNLLETAFTHTSYANEHRLLKISHNERLEFLGDAVLQLLISEYLYKKYPKKPEGDLSKLRAMIVREESLAGFARDCQFDQFIKLGKGEEKSGGRNRDTILGDAFEAFLGALLLDKDVAKVKEFIYQVMIPKVEAGEFEMITDYKTHLQELLQVNGDVAIRYQVISETGPAHDKVFDVEVLVEGKSIGQGQGRSKKLAEQEAAKNAVEKGLDSCI</sequence>
<feature type="chain" id="PRO_1000118939" description="Ribonuclease 3">
    <location>
        <begin position="1"/>
        <end position="232"/>
    </location>
</feature>
<feature type="domain" description="RNase III" evidence="1">
    <location>
        <begin position="5"/>
        <end position="134"/>
    </location>
</feature>
<feature type="domain" description="DRBM" evidence="1">
    <location>
        <begin position="160"/>
        <end position="229"/>
    </location>
</feature>
<feature type="active site" evidence="1">
    <location>
        <position position="51"/>
    </location>
</feature>
<feature type="active site" evidence="1">
    <location>
        <position position="123"/>
    </location>
</feature>
<feature type="binding site" evidence="1">
    <location>
        <position position="47"/>
    </location>
    <ligand>
        <name>Mg(2+)</name>
        <dbReference type="ChEBI" id="CHEBI:18420"/>
    </ligand>
</feature>
<feature type="binding site" evidence="1">
    <location>
        <position position="120"/>
    </location>
    <ligand>
        <name>Mg(2+)</name>
        <dbReference type="ChEBI" id="CHEBI:18420"/>
    </ligand>
</feature>
<feature type="binding site" evidence="1">
    <location>
        <position position="123"/>
    </location>
    <ligand>
        <name>Mg(2+)</name>
        <dbReference type="ChEBI" id="CHEBI:18420"/>
    </ligand>
</feature>
<accession>C1CR56</accession>
<comment type="function">
    <text evidence="1">Digests double-stranded RNA. Involved in the processing of primary rRNA transcript to yield the immediate precursors to the large and small rRNAs (23S and 16S). Processes some mRNAs, and tRNAs when they are encoded in the rRNA operon. Processes pre-crRNA and tracrRNA of type II CRISPR loci if present in the organism.</text>
</comment>
<comment type="catalytic activity">
    <reaction evidence="1">
        <text>Endonucleolytic cleavage to 5'-phosphomonoester.</text>
        <dbReference type="EC" id="3.1.26.3"/>
    </reaction>
</comment>
<comment type="cofactor">
    <cofactor evidence="1">
        <name>Mg(2+)</name>
        <dbReference type="ChEBI" id="CHEBI:18420"/>
    </cofactor>
</comment>
<comment type="subunit">
    <text evidence="1">Homodimer.</text>
</comment>
<comment type="subcellular location">
    <subcellularLocation>
        <location evidence="1">Cytoplasm</location>
    </subcellularLocation>
</comment>
<comment type="similarity">
    <text evidence="1">Belongs to the ribonuclease III family.</text>
</comment>
<dbReference type="EC" id="3.1.26.3" evidence="1"/>
<dbReference type="EMBL" id="CP000921">
    <property type="protein sequence ID" value="ACO22437.1"/>
    <property type="molecule type" value="Genomic_DNA"/>
</dbReference>
<dbReference type="RefSeq" id="WP_000661503.1">
    <property type="nucleotide sequence ID" value="NC_012469.1"/>
</dbReference>
<dbReference type="SMR" id="C1CR56"/>
<dbReference type="KEGG" id="snt:SPT_0981"/>
<dbReference type="HOGENOM" id="CLU_000907_1_3_9"/>
<dbReference type="GO" id="GO:0005737">
    <property type="term" value="C:cytoplasm"/>
    <property type="evidence" value="ECO:0007669"/>
    <property type="project" value="UniProtKB-SubCell"/>
</dbReference>
<dbReference type="GO" id="GO:0003725">
    <property type="term" value="F:double-stranded RNA binding"/>
    <property type="evidence" value="ECO:0007669"/>
    <property type="project" value="TreeGrafter"/>
</dbReference>
<dbReference type="GO" id="GO:0046872">
    <property type="term" value="F:metal ion binding"/>
    <property type="evidence" value="ECO:0007669"/>
    <property type="project" value="UniProtKB-KW"/>
</dbReference>
<dbReference type="GO" id="GO:0004525">
    <property type="term" value="F:ribonuclease III activity"/>
    <property type="evidence" value="ECO:0007669"/>
    <property type="project" value="UniProtKB-UniRule"/>
</dbReference>
<dbReference type="GO" id="GO:0019843">
    <property type="term" value="F:rRNA binding"/>
    <property type="evidence" value="ECO:0007669"/>
    <property type="project" value="UniProtKB-KW"/>
</dbReference>
<dbReference type="GO" id="GO:0006397">
    <property type="term" value="P:mRNA processing"/>
    <property type="evidence" value="ECO:0007669"/>
    <property type="project" value="UniProtKB-UniRule"/>
</dbReference>
<dbReference type="GO" id="GO:0010468">
    <property type="term" value="P:regulation of gene expression"/>
    <property type="evidence" value="ECO:0007669"/>
    <property type="project" value="TreeGrafter"/>
</dbReference>
<dbReference type="GO" id="GO:0006364">
    <property type="term" value="P:rRNA processing"/>
    <property type="evidence" value="ECO:0007669"/>
    <property type="project" value="UniProtKB-UniRule"/>
</dbReference>
<dbReference type="GO" id="GO:0008033">
    <property type="term" value="P:tRNA processing"/>
    <property type="evidence" value="ECO:0007669"/>
    <property type="project" value="UniProtKB-KW"/>
</dbReference>
<dbReference type="CDD" id="cd10845">
    <property type="entry name" value="DSRM_RNAse_III_family"/>
    <property type="match status" value="1"/>
</dbReference>
<dbReference type="CDD" id="cd00593">
    <property type="entry name" value="RIBOc"/>
    <property type="match status" value="1"/>
</dbReference>
<dbReference type="FunFam" id="1.10.1520.10:FF:000001">
    <property type="entry name" value="Ribonuclease 3"/>
    <property type="match status" value="1"/>
</dbReference>
<dbReference type="FunFam" id="3.30.160.20:FF:000003">
    <property type="entry name" value="Ribonuclease 3"/>
    <property type="match status" value="1"/>
</dbReference>
<dbReference type="Gene3D" id="3.30.160.20">
    <property type="match status" value="1"/>
</dbReference>
<dbReference type="Gene3D" id="1.10.1520.10">
    <property type="entry name" value="Ribonuclease III domain"/>
    <property type="match status" value="1"/>
</dbReference>
<dbReference type="HAMAP" id="MF_00104">
    <property type="entry name" value="RNase_III"/>
    <property type="match status" value="1"/>
</dbReference>
<dbReference type="InterPro" id="IPR014720">
    <property type="entry name" value="dsRBD_dom"/>
</dbReference>
<dbReference type="InterPro" id="IPR011907">
    <property type="entry name" value="RNase_III"/>
</dbReference>
<dbReference type="InterPro" id="IPR000999">
    <property type="entry name" value="RNase_III_dom"/>
</dbReference>
<dbReference type="InterPro" id="IPR036389">
    <property type="entry name" value="RNase_III_sf"/>
</dbReference>
<dbReference type="NCBIfam" id="TIGR02191">
    <property type="entry name" value="RNaseIII"/>
    <property type="match status" value="1"/>
</dbReference>
<dbReference type="PANTHER" id="PTHR11207:SF0">
    <property type="entry name" value="RIBONUCLEASE 3"/>
    <property type="match status" value="1"/>
</dbReference>
<dbReference type="PANTHER" id="PTHR11207">
    <property type="entry name" value="RIBONUCLEASE III"/>
    <property type="match status" value="1"/>
</dbReference>
<dbReference type="Pfam" id="PF00035">
    <property type="entry name" value="dsrm"/>
    <property type="match status" value="1"/>
</dbReference>
<dbReference type="Pfam" id="PF14622">
    <property type="entry name" value="Ribonucleas_3_3"/>
    <property type="match status" value="1"/>
</dbReference>
<dbReference type="SMART" id="SM00358">
    <property type="entry name" value="DSRM"/>
    <property type="match status" value="1"/>
</dbReference>
<dbReference type="SMART" id="SM00535">
    <property type="entry name" value="RIBOc"/>
    <property type="match status" value="1"/>
</dbReference>
<dbReference type="SUPFAM" id="SSF54768">
    <property type="entry name" value="dsRNA-binding domain-like"/>
    <property type="match status" value="1"/>
</dbReference>
<dbReference type="SUPFAM" id="SSF69065">
    <property type="entry name" value="RNase III domain-like"/>
    <property type="match status" value="1"/>
</dbReference>
<dbReference type="PROSITE" id="PS50137">
    <property type="entry name" value="DS_RBD"/>
    <property type="match status" value="1"/>
</dbReference>
<dbReference type="PROSITE" id="PS00517">
    <property type="entry name" value="RNASE_3_1"/>
    <property type="match status" value="1"/>
</dbReference>
<dbReference type="PROSITE" id="PS50142">
    <property type="entry name" value="RNASE_3_2"/>
    <property type="match status" value="1"/>
</dbReference>
<name>RNC_STRZT</name>
<reference key="1">
    <citation type="journal article" date="2010" name="Genome Biol.">
        <title>Structure and dynamics of the pan-genome of Streptococcus pneumoniae and closely related species.</title>
        <authorList>
            <person name="Donati C."/>
            <person name="Hiller N.L."/>
            <person name="Tettelin H."/>
            <person name="Muzzi A."/>
            <person name="Croucher N.J."/>
            <person name="Angiuoli S.V."/>
            <person name="Oggioni M."/>
            <person name="Dunning Hotopp J.C."/>
            <person name="Hu F.Z."/>
            <person name="Riley D.R."/>
            <person name="Covacci A."/>
            <person name="Mitchell T.J."/>
            <person name="Bentley S.D."/>
            <person name="Kilian M."/>
            <person name="Ehrlich G.D."/>
            <person name="Rappuoli R."/>
            <person name="Moxon E.R."/>
            <person name="Masignani V."/>
        </authorList>
    </citation>
    <scope>NUCLEOTIDE SEQUENCE [LARGE SCALE GENOMIC DNA]</scope>
    <source>
        <strain>Taiwan19F-14</strain>
    </source>
</reference>
<evidence type="ECO:0000255" key="1">
    <source>
        <dbReference type="HAMAP-Rule" id="MF_00104"/>
    </source>
</evidence>
<gene>
    <name evidence="1" type="primary">rnc</name>
    <name type="ordered locus">SPT_0981</name>
</gene>